<gene>
    <name evidence="1" type="primary">ftsB</name>
    <name type="ordered locus">NMCC_1199</name>
</gene>
<name>FTSB_NEIM0</name>
<accession>A9LZL5</accession>
<reference key="1">
    <citation type="journal article" date="2008" name="Genomics">
        <title>Characterization of ST-4821 complex, a unique Neisseria meningitidis clone.</title>
        <authorList>
            <person name="Peng J."/>
            <person name="Yang L."/>
            <person name="Yang F."/>
            <person name="Yang J."/>
            <person name="Yan Y."/>
            <person name="Nie H."/>
            <person name="Zhang X."/>
            <person name="Xiong Z."/>
            <person name="Jiang Y."/>
            <person name="Cheng F."/>
            <person name="Xu X."/>
            <person name="Chen S."/>
            <person name="Sun L."/>
            <person name="Li W."/>
            <person name="Shen Y."/>
            <person name="Shao Z."/>
            <person name="Liang X."/>
            <person name="Xu J."/>
            <person name="Jin Q."/>
        </authorList>
    </citation>
    <scope>NUCLEOTIDE SEQUENCE [LARGE SCALE GENOMIC DNA]</scope>
    <source>
        <strain>053442</strain>
    </source>
</reference>
<sequence length="92" mass="10563">MKWVTVVLSFALVCCQYSLWFGKGSIGRNSSLREQIAVQEEKNQTLALRNHSLAAEVYDLENGQEAISEIARVELGYIQDGETFYRLIRHNR</sequence>
<comment type="function">
    <text evidence="1">Essential cell division protein. May link together the upstream cell division proteins, which are predominantly cytoplasmic, with the downstream cell division proteins, which are predominantly periplasmic.</text>
</comment>
<comment type="subunit">
    <text evidence="1">Part of a complex composed of FtsB, FtsL and FtsQ.</text>
</comment>
<comment type="subcellular location">
    <subcellularLocation>
        <location evidence="1">Cell inner membrane</location>
        <topology evidence="1">Single-pass type II membrane protein</topology>
    </subcellularLocation>
    <text evidence="1">Localizes to the division septum.</text>
</comment>
<comment type="similarity">
    <text evidence="1">Belongs to the FtsB family.</text>
</comment>
<feature type="chain" id="PRO_1000082454" description="Cell division protein FtsB">
    <location>
        <begin position="1"/>
        <end position="92"/>
    </location>
</feature>
<feature type="topological domain" description="Cytoplasmic" evidence="1">
    <location>
        <begin position="1"/>
        <end position="3"/>
    </location>
</feature>
<feature type="transmembrane region" description="Helical" evidence="1">
    <location>
        <begin position="4"/>
        <end position="21"/>
    </location>
</feature>
<feature type="topological domain" description="Periplasmic" evidence="1">
    <location>
        <begin position="22"/>
        <end position="92"/>
    </location>
</feature>
<feature type="coiled-coil region" evidence="1">
    <location>
        <begin position="28"/>
        <end position="50"/>
    </location>
</feature>
<organism>
    <name type="scientific">Neisseria meningitidis serogroup C (strain 053442)</name>
    <dbReference type="NCBI Taxonomy" id="374833"/>
    <lineage>
        <taxon>Bacteria</taxon>
        <taxon>Pseudomonadati</taxon>
        <taxon>Pseudomonadota</taxon>
        <taxon>Betaproteobacteria</taxon>
        <taxon>Neisseriales</taxon>
        <taxon>Neisseriaceae</taxon>
        <taxon>Neisseria</taxon>
    </lineage>
</organism>
<keyword id="KW-0131">Cell cycle</keyword>
<keyword id="KW-0132">Cell division</keyword>
<keyword id="KW-0997">Cell inner membrane</keyword>
<keyword id="KW-1003">Cell membrane</keyword>
<keyword id="KW-0175">Coiled coil</keyword>
<keyword id="KW-0472">Membrane</keyword>
<keyword id="KW-0812">Transmembrane</keyword>
<keyword id="KW-1133">Transmembrane helix</keyword>
<proteinExistence type="inferred from homology"/>
<dbReference type="EMBL" id="CP000381">
    <property type="protein sequence ID" value="ABX73373.1"/>
    <property type="molecule type" value="Genomic_DNA"/>
</dbReference>
<dbReference type="RefSeq" id="WP_002213385.1">
    <property type="nucleotide sequence ID" value="NC_010120.1"/>
</dbReference>
<dbReference type="SMR" id="A9LZL5"/>
<dbReference type="GeneID" id="93385912"/>
<dbReference type="KEGG" id="nmn:NMCC_1199"/>
<dbReference type="HOGENOM" id="CLU_134863_5_2_4"/>
<dbReference type="Proteomes" id="UP000001177">
    <property type="component" value="Chromosome"/>
</dbReference>
<dbReference type="GO" id="GO:0032153">
    <property type="term" value="C:cell division site"/>
    <property type="evidence" value="ECO:0007669"/>
    <property type="project" value="UniProtKB-UniRule"/>
</dbReference>
<dbReference type="GO" id="GO:0030428">
    <property type="term" value="C:cell septum"/>
    <property type="evidence" value="ECO:0007669"/>
    <property type="project" value="TreeGrafter"/>
</dbReference>
<dbReference type="GO" id="GO:0005886">
    <property type="term" value="C:plasma membrane"/>
    <property type="evidence" value="ECO:0007669"/>
    <property type="project" value="UniProtKB-SubCell"/>
</dbReference>
<dbReference type="GO" id="GO:0043093">
    <property type="term" value="P:FtsZ-dependent cytokinesis"/>
    <property type="evidence" value="ECO:0007669"/>
    <property type="project" value="UniProtKB-UniRule"/>
</dbReference>
<dbReference type="HAMAP" id="MF_00599">
    <property type="entry name" value="FtsB"/>
    <property type="match status" value="1"/>
</dbReference>
<dbReference type="InterPro" id="IPR023081">
    <property type="entry name" value="Cell_div_FtsB"/>
</dbReference>
<dbReference type="InterPro" id="IPR007060">
    <property type="entry name" value="FtsL/DivIC"/>
</dbReference>
<dbReference type="NCBIfam" id="NF002058">
    <property type="entry name" value="PRK00888.1"/>
    <property type="match status" value="1"/>
</dbReference>
<dbReference type="PANTHER" id="PTHR37485">
    <property type="entry name" value="CELL DIVISION PROTEIN FTSB"/>
    <property type="match status" value="1"/>
</dbReference>
<dbReference type="PANTHER" id="PTHR37485:SF1">
    <property type="entry name" value="CELL DIVISION PROTEIN FTSB"/>
    <property type="match status" value="1"/>
</dbReference>
<dbReference type="Pfam" id="PF04977">
    <property type="entry name" value="DivIC"/>
    <property type="match status" value="1"/>
</dbReference>
<protein>
    <recommendedName>
        <fullName evidence="1">Cell division protein FtsB</fullName>
    </recommendedName>
</protein>
<evidence type="ECO:0000255" key="1">
    <source>
        <dbReference type="HAMAP-Rule" id="MF_00599"/>
    </source>
</evidence>